<keyword id="KW-0963">Cytoplasm</keyword>
<keyword id="KW-0255">Endonuclease</keyword>
<keyword id="KW-0378">Hydrolase</keyword>
<keyword id="KW-0460">Magnesium</keyword>
<keyword id="KW-0479">Metal-binding</keyword>
<keyword id="KW-0507">mRNA processing</keyword>
<keyword id="KW-0540">Nuclease</keyword>
<keyword id="KW-0694">RNA-binding</keyword>
<keyword id="KW-0698">rRNA processing</keyword>
<keyword id="KW-0699">rRNA-binding</keyword>
<keyword id="KW-0819">tRNA processing</keyword>
<feature type="chain" id="PRO_1000075786" description="Ribonuclease 3">
    <location>
        <begin position="1"/>
        <end position="229"/>
    </location>
</feature>
<feature type="domain" description="RNase III" evidence="1">
    <location>
        <begin position="5"/>
        <end position="127"/>
    </location>
</feature>
<feature type="domain" description="DRBM" evidence="1">
    <location>
        <begin position="154"/>
        <end position="224"/>
    </location>
</feature>
<feature type="active site" evidence="1">
    <location>
        <position position="44"/>
    </location>
</feature>
<feature type="active site" evidence="1">
    <location>
        <position position="116"/>
    </location>
</feature>
<feature type="binding site" evidence="1">
    <location>
        <position position="40"/>
    </location>
    <ligand>
        <name>Mg(2+)</name>
        <dbReference type="ChEBI" id="CHEBI:18420"/>
    </ligand>
</feature>
<feature type="binding site" evidence="1">
    <location>
        <position position="113"/>
    </location>
    <ligand>
        <name>Mg(2+)</name>
        <dbReference type="ChEBI" id="CHEBI:18420"/>
    </ligand>
</feature>
<feature type="binding site" evidence="1">
    <location>
        <position position="116"/>
    </location>
    <ligand>
        <name>Mg(2+)</name>
        <dbReference type="ChEBI" id="CHEBI:18420"/>
    </ligand>
</feature>
<accession>A6VAK6</accession>
<gene>
    <name evidence="1" type="primary">rnc</name>
    <name type="ordered locus">PSPA7_4749</name>
</gene>
<dbReference type="EC" id="3.1.26.3" evidence="1"/>
<dbReference type="EMBL" id="CP000744">
    <property type="protein sequence ID" value="ABR83659.1"/>
    <property type="molecule type" value="Genomic_DNA"/>
</dbReference>
<dbReference type="RefSeq" id="WP_003150219.1">
    <property type="nucleotide sequence ID" value="NC_009656.1"/>
</dbReference>
<dbReference type="SMR" id="A6VAK6"/>
<dbReference type="GeneID" id="77222661"/>
<dbReference type="KEGG" id="pap:PSPA7_4749"/>
<dbReference type="HOGENOM" id="CLU_000907_1_1_6"/>
<dbReference type="Proteomes" id="UP000001582">
    <property type="component" value="Chromosome"/>
</dbReference>
<dbReference type="GO" id="GO:0005737">
    <property type="term" value="C:cytoplasm"/>
    <property type="evidence" value="ECO:0007669"/>
    <property type="project" value="UniProtKB-SubCell"/>
</dbReference>
<dbReference type="GO" id="GO:0003725">
    <property type="term" value="F:double-stranded RNA binding"/>
    <property type="evidence" value="ECO:0007669"/>
    <property type="project" value="TreeGrafter"/>
</dbReference>
<dbReference type="GO" id="GO:0046872">
    <property type="term" value="F:metal ion binding"/>
    <property type="evidence" value="ECO:0007669"/>
    <property type="project" value="UniProtKB-KW"/>
</dbReference>
<dbReference type="GO" id="GO:0004525">
    <property type="term" value="F:ribonuclease III activity"/>
    <property type="evidence" value="ECO:0007669"/>
    <property type="project" value="UniProtKB-UniRule"/>
</dbReference>
<dbReference type="GO" id="GO:0019843">
    <property type="term" value="F:rRNA binding"/>
    <property type="evidence" value="ECO:0007669"/>
    <property type="project" value="UniProtKB-KW"/>
</dbReference>
<dbReference type="GO" id="GO:0006397">
    <property type="term" value="P:mRNA processing"/>
    <property type="evidence" value="ECO:0007669"/>
    <property type="project" value="UniProtKB-UniRule"/>
</dbReference>
<dbReference type="GO" id="GO:0010468">
    <property type="term" value="P:regulation of gene expression"/>
    <property type="evidence" value="ECO:0007669"/>
    <property type="project" value="TreeGrafter"/>
</dbReference>
<dbReference type="GO" id="GO:0006364">
    <property type="term" value="P:rRNA processing"/>
    <property type="evidence" value="ECO:0007669"/>
    <property type="project" value="UniProtKB-UniRule"/>
</dbReference>
<dbReference type="GO" id="GO:0008033">
    <property type="term" value="P:tRNA processing"/>
    <property type="evidence" value="ECO:0007669"/>
    <property type="project" value="UniProtKB-KW"/>
</dbReference>
<dbReference type="CDD" id="cd10845">
    <property type="entry name" value="DSRM_RNAse_III_family"/>
    <property type="match status" value="1"/>
</dbReference>
<dbReference type="CDD" id="cd00593">
    <property type="entry name" value="RIBOc"/>
    <property type="match status" value="1"/>
</dbReference>
<dbReference type="FunFam" id="1.10.1520.10:FF:000001">
    <property type="entry name" value="Ribonuclease 3"/>
    <property type="match status" value="1"/>
</dbReference>
<dbReference type="FunFam" id="3.30.160.20:FF:000077">
    <property type="entry name" value="Ribonuclease 3"/>
    <property type="match status" value="1"/>
</dbReference>
<dbReference type="Gene3D" id="3.30.160.20">
    <property type="match status" value="1"/>
</dbReference>
<dbReference type="Gene3D" id="1.10.1520.10">
    <property type="entry name" value="Ribonuclease III domain"/>
    <property type="match status" value="1"/>
</dbReference>
<dbReference type="HAMAP" id="MF_00104">
    <property type="entry name" value="RNase_III"/>
    <property type="match status" value="1"/>
</dbReference>
<dbReference type="InterPro" id="IPR014720">
    <property type="entry name" value="dsRBD_dom"/>
</dbReference>
<dbReference type="InterPro" id="IPR011907">
    <property type="entry name" value="RNase_III"/>
</dbReference>
<dbReference type="InterPro" id="IPR000999">
    <property type="entry name" value="RNase_III_dom"/>
</dbReference>
<dbReference type="InterPro" id="IPR036389">
    <property type="entry name" value="RNase_III_sf"/>
</dbReference>
<dbReference type="NCBIfam" id="TIGR02191">
    <property type="entry name" value="RNaseIII"/>
    <property type="match status" value="1"/>
</dbReference>
<dbReference type="PANTHER" id="PTHR11207:SF0">
    <property type="entry name" value="RIBONUCLEASE 3"/>
    <property type="match status" value="1"/>
</dbReference>
<dbReference type="PANTHER" id="PTHR11207">
    <property type="entry name" value="RIBONUCLEASE III"/>
    <property type="match status" value="1"/>
</dbReference>
<dbReference type="Pfam" id="PF00035">
    <property type="entry name" value="dsrm"/>
    <property type="match status" value="1"/>
</dbReference>
<dbReference type="Pfam" id="PF14622">
    <property type="entry name" value="Ribonucleas_3_3"/>
    <property type="match status" value="1"/>
</dbReference>
<dbReference type="SMART" id="SM00358">
    <property type="entry name" value="DSRM"/>
    <property type="match status" value="1"/>
</dbReference>
<dbReference type="SMART" id="SM00535">
    <property type="entry name" value="RIBOc"/>
    <property type="match status" value="1"/>
</dbReference>
<dbReference type="SUPFAM" id="SSF54768">
    <property type="entry name" value="dsRNA-binding domain-like"/>
    <property type="match status" value="1"/>
</dbReference>
<dbReference type="SUPFAM" id="SSF69065">
    <property type="entry name" value="RNase III domain-like"/>
    <property type="match status" value="1"/>
</dbReference>
<dbReference type="PROSITE" id="PS50137">
    <property type="entry name" value="DS_RBD"/>
    <property type="match status" value="1"/>
</dbReference>
<dbReference type="PROSITE" id="PS00517">
    <property type="entry name" value="RNASE_3_1"/>
    <property type="match status" value="1"/>
</dbReference>
<dbReference type="PROSITE" id="PS50142">
    <property type="entry name" value="RNASE_3_2"/>
    <property type="match status" value="1"/>
</dbReference>
<organism>
    <name type="scientific">Pseudomonas paraeruginosa (strain DSM 24068 / PA7)</name>
    <name type="common">Pseudomonas aeruginosa (strain PA7)</name>
    <dbReference type="NCBI Taxonomy" id="381754"/>
    <lineage>
        <taxon>Bacteria</taxon>
        <taxon>Pseudomonadati</taxon>
        <taxon>Pseudomonadota</taxon>
        <taxon>Gammaproteobacteria</taxon>
        <taxon>Pseudomonadales</taxon>
        <taxon>Pseudomonadaceae</taxon>
        <taxon>Pseudomonas</taxon>
        <taxon>Pseudomonas paraeruginosa</taxon>
    </lineage>
</organism>
<evidence type="ECO:0000255" key="1">
    <source>
        <dbReference type="HAMAP-Rule" id="MF_00104"/>
    </source>
</evidence>
<protein>
    <recommendedName>
        <fullName evidence="1">Ribonuclease 3</fullName>
        <ecNumber evidence="1">3.1.26.3</ecNumber>
    </recommendedName>
    <alternativeName>
        <fullName evidence="1">Ribonuclease III</fullName>
        <shortName evidence="1">RNase III</shortName>
    </alternativeName>
</protein>
<name>RNC_PSEP7</name>
<comment type="function">
    <text evidence="1">Digests double-stranded RNA. Involved in the processing of primary rRNA transcript to yield the immediate precursors to the large and small rRNAs (23S and 16S). Processes some mRNAs, and tRNAs when they are encoded in the rRNA operon. Processes pre-crRNA and tracrRNA of type II CRISPR loci if present in the organism.</text>
</comment>
<comment type="catalytic activity">
    <reaction evidence="1">
        <text>Endonucleolytic cleavage to 5'-phosphomonoester.</text>
        <dbReference type="EC" id="3.1.26.3"/>
    </reaction>
</comment>
<comment type="cofactor">
    <cofactor evidence="1">
        <name>Mg(2+)</name>
        <dbReference type="ChEBI" id="CHEBI:18420"/>
    </cofactor>
</comment>
<comment type="subunit">
    <text evidence="1">Homodimer.</text>
</comment>
<comment type="subcellular location">
    <subcellularLocation>
        <location evidence="1">Cytoplasm</location>
    </subcellularLocation>
</comment>
<comment type="similarity">
    <text evidence="1">Belongs to the ribonuclease III family.</text>
</comment>
<reference key="1">
    <citation type="submission" date="2007-06" db="EMBL/GenBank/DDBJ databases">
        <authorList>
            <person name="Dodson R.J."/>
            <person name="Harkins D."/>
            <person name="Paulsen I.T."/>
        </authorList>
    </citation>
    <scope>NUCLEOTIDE SEQUENCE [LARGE SCALE GENOMIC DNA]</scope>
    <source>
        <strain>DSM 24068 / PA7</strain>
    </source>
</reference>
<sequence length="229" mass="25488">MSNPLDRLERKLGYTFKDQDLMVLALTHRSYAGRNNERLEFLGDAILNFVIGEALFHHFPQAREGQLSRLRARLVKGETLALLARGFEVGDYLRLGSGELKSGGFRRESILADAMEALIGAIYLDTGMDSARERIIAWLGPQLRELTPVDTNKDPKTRLQEFLQSRGCDLPRYEVVDIQGEPHCRTFFVDCEVALLSDKTHGHGGSRRIAEQVAAAAALVALGVENGHD</sequence>
<proteinExistence type="inferred from homology"/>